<sequence length="317" mass="34751">MPVQGSQRRLLGSLNSTPTATPHLGLAANQTGARCLEVSVPDGLFLSLGLVSLVENVLVVTAIAKNRNLHSPMYCFICCLALSDLLVSGSNMLETAVTLLLEAGALAARAAVVQQLDNVIDVITCSSMLSSLCFLGAIAVDRYISIFYALRYHSIVTLPRARRAVAAIWVASVLFSTLFIAYYDHAAVLLCLVIFFLAMLVLMAVLYVHMLARACQHAQGIARLHKRQRLAHQGFGLKGAATLTILLGIFFLCWGPFFLHLTLIVLCPQHPTCSCIFKNFNLFLALIICNAIIDPLIYAFRSQELRRTLKEVLLCSW</sequence>
<dbReference type="EMBL" id="AY205105">
    <property type="protein sequence ID" value="AAP30979.1"/>
    <property type="molecule type" value="Genomic_DNA"/>
</dbReference>
<dbReference type="SMR" id="Q864J2"/>
<dbReference type="GlyCosmos" id="Q864J2">
    <property type="glycosylation" value="1 site, No reported glycans"/>
</dbReference>
<dbReference type="GO" id="GO:0005886">
    <property type="term" value="C:plasma membrane"/>
    <property type="evidence" value="ECO:0000250"/>
    <property type="project" value="UniProtKB"/>
</dbReference>
<dbReference type="GO" id="GO:0004980">
    <property type="term" value="F:melanocyte-stimulating hormone receptor activity"/>
    <property type="evidence" value="ECO:0007669"/>
    <property type="project" value="InterPro"/>
</dbReference>
<dbReference type="GO" id="GO:0007189">
    <property type="term" value="P:adenylate cyclase-activating G protein-coupled receptor signaling pathway"/>
    <property type="evidence" value="ECO:0007669"/>
    <property type="project" value="UniProtKB-ARBA"/>
</dbReference>
<dbReference type="CDD" id="cd15351">
    <property type="entry name" value="7tmA_MC1R"/>
    <property type="match status" value="1"/>
</dbReference>
<dbReference type="FunFam" id="1.20.1070.10:FF:000211">
    <property type="entry name" value="Melanocyte-stimulating hormone receptor"/>
    <property type="match status" value="1"/>
</dbReference>
<dbReference type="Gene3D" id="1.20.1070.10">
    <property type="entry name" value="Rhodopsin 7-helix transmembrane proteins"/>
    <property type="match status" value="1"/>
</dbReference>
<dbReference type="InterPro" id="IPR000276">
    <property type="entry name" value="GPCR_Rhodpsn"/>
</dbReference>
<dbReference type="InterPro" id="IPR017452">
    <property type="entry name" value="GPCR_Rhodpsn_7TM"/>
</dbReference>
<dbReference type="InterPro" id="IPR001671">
    <property type="entry name" value="Melcrt_ACTH_rcpt"/>
</dbReference>
<dbReference type="InterPro" id="IPR000761">
    <property type="entry name" value="MSH_rcpt"/>
</dbReference>
<dbReference type="PANTHER" id="PTHR22750">
    <property type="entry name" value="G-PROTEIN COUPLED RECEPTOR"/>
    <property type="match status" value="1"/>
</dbReference>
<dbReference type="Pfam" id="PF00001">
    <property type="entry name" value="7tm_1"/>
    <property type="match status" value="2"/>
</dbReference>
<dbReference type="PRINTS" id="PR00237">
    <property type="entry name" value="GPCRRHODOPSN"/>
</dbReference>
<dbReference type="PRINTS" id="PR00534">
    <property type="entry name" value="MCRFAMILY"/>
</dbReference>
<dbReference type="PRINTS" id="PR00536">
    <property type="entry name" value="MELNOCYTESHR"/>
</dbReference>
<dbReference type="SMART" id="SM01381">
    <property type="entry name" value="7TM_GPCR_Srsx"/>
    <property type="match status" value="1"/>
</dbReference>
<dbReference type="SUPFAM" id="SSF81321">
    <property type="entry name" value="Family A G protein-coupled receptor-like"/>
    <property type="match status" value="1"/>
</dbReference>
<dbReference type="PROSITE" id="PS00237">
    <property type="entry name" value="G_PROTEIN_RECEP_F1_1"/>
    <property type="match status" value="1"/>
</dbReference>
<dbReference type="PROSITE" id="PS50262">
    <property type="entry name" value="G_PROTEIN_RECEP_F1_2"/>
    <property type="match status" value="1"/>
</dbReference>
<feature type="chain" id="PRO_0000069839" description="Melanocyte-stimulating hormone receptor">
    <location>
        <begin position="1"/>
        <end position="317"/>
    </location>
</feature>
<feature type="topological domain" description="Extracellular" evidence="2">
    <location>
        <begin position="1"/>
        <end position="37"/>
    </location>
</feature>
<feature type="transmembrane region" description="Helical; Name=1" evidence="2">
    <location>
        <begin position="38"/>
        <end position="63"/>
    </location>
</feature>
<feature type="topological domain" description="Cytoplasmic" evidence="2">
    <location>
        <begin position="64"/>
        <end position="72"/>
    </location>
</feature>
<feature type="transmembrane region" description="Helical; Name=2" evidence="2">
    <location>
        <begin position="73"/>
        <end position="93"/>
    </location>
</feature>
<feature type="topological domain" description="Extracellular" evidence="2">
    <location>
        <begin position="94"/>
        <end position="118"/>
    </location>
</feature>
<feature type="transmembrane region" description="Helical; Name=3" evidence="2">
    <location>
        <begin position="119"/>
        <end position="140"/>
    </location>
</feature>
<feature type="topological domain" description="Cytoplasmic" evidence="2">
    <location>
        <begin position="141"/>
        <end position="163"/>
    </location>
</feature>
<feature type="transmembrane region" description="Helical; Name=4" evidence="2">
    <location>
        <begin position="164"/>
        <end position="183"/>
    </location>
</feature>
<feature type="topological domain" description="Extracellular" evidence="2">
    <location>
        <begin position="184"/>
        <end position="191"/>
    </location>
</feature>
<feature type="transmembrane region" description="Helical; Name=5" evidence="2">
    <location>
        <begin position="192"/>
        <end position="211"/>
    </location>
</feature>
<feature type="topological domain" description="Cytoplasmic" evidence="2">
    <location>
        <begin position="212"/>
        <end position="240"/>
    </location>
</feature>
<feature type="transmembrane region" description="Helical; Name=6" evidence="2">
    <location>
        <begin position="241"/>
        <end position="266"/>
    </location>
</feature>
<feature type="topological domain" description="Extracellular" evidence="2">
    <location>
        <begin position="267"/>
        <end position="279"/>
    </location>
</feature>
<feature type="transmembrane region" description="Helical; Name=7" evidence="2">
    <location>
        <begin position="280"/>
        <end position="300"/>
    </location>
</feature>
<feature type="topological domain" description="Cytoplasmic" evidence="2">
    <location>
        <begin position="301"/>
        <end position="317"/>
    </location>
</feature>
<feature type="lipid moiety-binding region" description="S-palmitoyl cysteine" evidence="2">
    <location>
        <position position="315"/>
    </location>
</feature>
<feature type="glycosylation site" description="N-linked (GlcNAc...) asparagine" evidence="2">
    <location>
        <position position="29"/>
    </location>
</feature>
<organism>
    <name type="scientific">Papio hamadryas</name>
    <name type="common">Hamadryas baboon</name>
    <dbReference type="NCBI Taxonomy" id="9557"/>
    <lineage>
        <taxon>Eukaryota</taxon>
        <taxon>Metazoa</taxon>
        <taxon>Chordata</taxon>
        <taxon>Craniata</taxon>
        <taxon>Vertebrata</taxon>
        <taxon>Euteleostomi</taxon>
        <taxon>Mammalia</taxon>
        <taxon>Eutheria</taxon>
        <taxon>Euarchontoglires</taxon>
        <taxon>Primates</taxon>
        <taxon>Haplorrhini</taxon>
        <taxon>Catarrhini</taxon>
        <taxon>Cercopithecidae</taxon>
        <taxon>Cercopithecinae</taxon>
        <taxon>Papio</taxon>
    </lineage>
</organism>
<reference key="1">
    <citation type="journal article" date="2003" name="Am. J. Phys. Anthropol.">
        <title>Evolution of a pigmentation gene, the melanocortin-1 receptor, in primates.</title>
        <authorList>
            <person name="Mundy N.I."/>
            <person name="Kelly J."/>
        </authorList>
    </citation>
    <scope>NUCLEOTIDE SEQUENCE [GENOMIC DNA]</scope>
    <source>
        <strain>Isolate 1</strain>
    </source>
</reference>
<comment type="function">
    <text evidence="1">Receptor for MSH (alpha, beta and gamma) and ACTH. The activity of this receptor is mediated by G proteins which activate adenylate cyclase. Mediates melanogenesis, the production of eumelanin (black/brown) and phaeomelanin (red/yellow), via regulation of cAMP signaling in melanocytes.</text>
</comment>
<comment type="subunit">
    <text evidence="1">Interacts with MGRN1, but does not undergo MGRN1-mediated ubiquitination; this interaction competes with GNAS-binding and thus inhibits agonist-induced cAMP production. Interacts with OPN3; the interaction results in a decrease in MC1R-mediated cAMP signaling and ultimately a decrease in melanin production in melanocytes.</text>
</comment>
<comment type="subcellular location">
    <subcellularLocation>
        <location evidence="1">Cell membrane</location>
        <topology evidence="2">Multi-pass membrane protein</topology>
    </subcellularLocation>
</comment>
<comment type="similarity">
    <text evidence="3">Belongs to the G-protein coupled receptor 1 family.</text>
</comment>
<name>MSHR_PAPHA</name>
<protein>
    <recommendedName>
        <fullName>Melanocyte-stimulating hormone receptor</fullName>
        <shortName>MSH-R</shortName>
    </recommendedName>
    <alternativeName>
        <fullName>Melanocortin receptor 1</fullName>
        <shortName>MC1-R</shortName>
    </alternativeName>
</protein>
<evidence type="ECO:0000250" key="1">
    <source>
        <dbReference type="UniProtKB" id="Q01726"/>
    </source>
</evidence>
<evidence type="ECO:0000255" key="2"/>
<evidence type="ECO:0000255" key="3">
    <source>
        <dbReference type="PROSITE-ProRule" id="PRU00521"/>
    </source>
</evidence>
<proteinExistence type="inferred from homology"/>
<gene>
    <name type="primary">MC1R</name>
</gene>
<keyword id="KW-1003">Cell membrane</keyword>
<keyword id="KW-0297">G-protein coupled receptor</keyword>
<keyword id="KW-0325">Glycoprotein</keyword>
<keyword id="KW-0449">Lipoprotein</keyword>
<keyword id="KW-0472">Membrane</keyword>
<keyword id="KW-0564">Palmitate</keyword>
<keyword id="KW-0675">Receptor</keyword>
<keyword id="KW-0807">Transducer</keyword>
<keyword id="KW-0812">Transmembrane</keyword>
<keyword id="KW-1133">Transmembrane helix</keyword>
<accession>Q864J2</accession>